<sequence length="222" mass="24540">MEFLTHSLLPLHEVCALQQRLSAPNLPWRDGRLTAGDQAALVKKNYQLDPNAELSLAISNCISTALTSDPLVKSFSLVRKVHSLLVSRSSAGESYGWHVDNPFSRNGRRDLSFTCFLSDEDSYEGGSLMIQTGGEDTKEFRLPPGQVVLYPSSTLHCVTPVLSGDRYVCVGWIESYVKAADDRSMLFNIDAGARGLLARHGRSDELDLIFQSYTNAVRRLSS</sequence>
<keyword id="KW-0223">Dioxygenase</keyword>
<keyword id="KW-0408">Iron</keyword>
<keyword id="KW-0479">Metal-binding</keyword>
<keyword id="KW-0560">Oxidoreductase</keyword>
<keyword id="KW-0847">Vitamin C</keyword>
<evidence type="ECO:0000255" key="1">
    <source>
        <dbReference type="HAMAP-Rule" id="MF_00657"/>
    </source>
</evidence>
<reference key="1">
    <citation type="submission" date="2005-07" db="EMBL/GenBank/DDBJ databases">
        <title>Complete sequence of Synechococcus sp. CC9605.</title>
        <authorList>
            <consortium name="US DOE Joint Genome Institute"/>
            <person name="Copeland A."/>
            <person name="Lucas S."/>
            <person name="Lapidus A."/>
            <person name="Barry K."/>
            <person name="Detter J.C."/>
            <person name="Glavina T."/>
            <person name="Hammon N."/>
            <person name="Israni S."/>
            <person name="Pitluck S."/>
            <person name="Schmutz J."/>
            <person name="Martinez M."/>
            <person name="Larimer F."/>
            <person name="Land M."/>
            <person name="Kyrpides N."/>
            <person name="Ivanova N."/>
            <person name="Richardson P."/>
        </authorList>
    </citation>
    <scope>NUCLEOTIDE SEQUENCE [LARGE SCALE GENOMIC DNA]</scope>
    <source>
        <strain>CC9605</strain>
    </source>
</reference>
<proteinExistence type="inferred from homology"/>
<accession>Q3AJA6</accession>
<name>Y1577_SYNSC</name>
<dbReference type="EC" id="1.14.11.-" evidence="1"/>
<dbReference type="EMBL" id="CP000110">
    <property type="protein sequence ID" value="ABB35326.1"/>
    <property type="molecule type" value="Genomic_DNA"/>
</dbReference>
<dbReference type="RefSeq" id="WP_011364538.1">
    <property type="nucleotide sequence ID" value="NC_007516.1"/>
</dbReference>
<dbReference type="SMR" id="Q3AJA6"/>
<dbReference type="STRING" id="110662.Syncc9605_1577"/>
<dbReference type="KEGG" id="syd:Syncc9605_1577"/>
<dbReference type="eggNOG" id="COG3128">
    <property type="taxonomic scope" value="Bacteria"/>
</dbReference>
<dbReference type="HOGENOM" id="CLU_106663_0_0_3"/>
<dbReference type="OrthoDB" id="9812472at2"/>
<dbReference type="GO" id="GO:0016706">
    <property type="term" value="F:2-oxoglutarate-dependent dioxygenase activity"/>
    <property type="evidence" value="ECO:0007669"/>
    <property type="project" value="UniProtKB-UniRule"/>
</dbReference>
<dbReference type="GO" id="GO:0005506">
    <property type="term" value="F:iron ion binding"/>
    <property type="evidence" value="ECO:0007669"/>
    <property type="project" value="UniProtKB-UniRule"/>
</dbReference>
<dbReference type="GO" id="GO:0031418">
    <property type="term" value="F:L-ascorbic acid binding"/>
    <property type="evidence" value="ECO:0007669"/>
    <property type="project" value="UniProtKB-KW"/>
</dbReference>
<dbReference type="GO" id="GO:0006974">
    <property type="term" value="P:DNA damage response"/>
    <property type="evidence" value="ECO:0007669"/>
    <property type="project" value="TreeGrafter"/>
</dbReference>
<dbReference type="GO" id="GO:0006879">
    <property type="term" value="P:intracellular iron ion homeostasis"/>
    <property type="evidence" value="ECO:0007669"/>
    <property type="project" value="TreeGrafter"/>
</dbReference>
<dbReference type="Gene3D" id="2.60.120.620">
    <property type="entry name" value="q2cbj1_9rhob like domain"/>
    <property type="match status" value="1"/>
</dbReference>
<dbReference type="HAMAP" id="MF_00657">
    <property type="entry name" value="Hydroxyl_YbiX"/>
    <property type="match status" value="1"/>
</dbReference>
<dbReference type="InterPro" id="IPR005123">
    <property type="entry name" value="Oxoglu/Fe-dep_dioxygenase_dom"/>
</dbReference>
<dbReference type="InterPro" id="IPR023550">
    <property type="entry name" value="PKHD_hydroxylase"/>
</dbReference>
<dbReference type="InterPro" id="IPR006620">
    <property type="entry name" value="Pro_4_hyd_alph"/>
</dbReference>
<dbReference type="InterPro" id="IPR044862">
    <property type="entry name" value="Pro_4_hyd_alph_FE2OG_OXY"/>
</dbReference>
<dbReference type="NCBIfam" id="NF003974">
    <property type="entry name" value="PRK05467.1-3"/>
    <property type="match status" value="1"/>
</dbReference>
<dbReference type="PANTHER" id="PTHR41536">
    <property type="entry name" value="PKHD-TYPE HYDROXYLASE YBIX"/>
    <property type="match status" value="1"/>
</dbReference>
<dbReference type="PANTHER" id="PTHR41536:SF1">
    <property type="entry name" value="PKHD-TYPE HYDROXYLASE YBIX"/>
    <property type="match status" value="1"/>
</dbReference>
<dbReference type="Pfam" id="PF13640">
    <property type="entry name" value="2OG-FeII_Oxy_3"/>
    <property type="match status" value="1"/>
</dbReference>
<dbReference type="SMART" id="SM00702">
    <property type="entry name" value="P4Hc"/>
    <property type="match status" value="1"/>
</dbReference>
<dbReference type="SUPFAM" id="SSF51197">
    <property type="entry name" value="Clavaminate synthase-like"/>
    <property type="match status" value="1"/>
</dbReference>
<dbReference type="PROSITE" id="PS51471">
    <property type="entry name" value="FE2OG_OXY"/>
    <property type="match status" value="1"/>
</dbReference>
<comment type="cofactor">
    <cofactor evidence="1">
        <name>Fe(2+)</name>
        <dbReference type="ChEBI" id="CHEBI:29033"/>
    </cofactor>
    <text evidence="1">Binds 1 Fe(2+) ion per subunit.</text>
</comment>
<comment type="cofactor">
    <cofactor evidence="1">
        <name>L-ascorbate</name>
        <dbReference type="ChEBI" id="CHEBI:38290"/>
    </cofactor>
</comment>
<protein>
    <recommendedName>
        <fullName evidence="1">PKHD-type hydroxylase Syncc9605_1577</fullName>
        <ecNumber evidence="1">1.14.11.-</ecNumber>
    </recommendedName>
</protein>
<organism>
    <name type="scientific">Synechococcus sp. (strain CC9605)</name>
    <dbReference type="NCBI Taxonomy" id="110662"/>
    <lineage>
        <taxon>Bacteria</taxon>
        <taxon>Bacillati</taxon>
        <taxon>Cyanobacteriota</taxon>
        <taxon>Cyanophyceae</taxon>
        <taxon>Synechococcales</taxon>
        <taxon>Synechococcaceae</taxon>
        <taxon>Synechococcus</taxon>
    </lineage>
</organism>
<feature type="chain" id="PRO_0000346529" description="PKHD-type hydroxylase Syncc9605_1577">
    <location>
        <begin position="1"/>
        <end position="222"/>
    </location>
</feature>
<feature type="domain" description="Fe2OG dioxygenase" evidence="1">
    <location>
        <begin position="80"/>
        <end position="175"/>
    </location>
</feature>
<feature type="binding site" evidence="1">
    <location>
        <position position="98"/>
    </location>
    <ligand>
        <name>Fe cation</name>
        <dbReference type="ChEBI" id="CHEBI:24875"/>
    </ligand>
</feature>
<feature type="binding site" evidence="1">
    <location>
        <position position="100"/>
    </location>
    <ligand>
        <name>Fe cation</name>
        <dbReference type="ChEBI" id="CHEBI:24875"/>
    </ligand>
</feature>
<feature type="binding site" evidence="1">
    <location>
        <position position="156"/>
    </location>
    <ligand>
        <name>Fe cation</name>
        <dbReference type="ChEBI" id="CHEBI:24875"/>
    </ligand>
</feature>
<feature type="binding site" evidence="1">
    <location>
        <position position="166"/>
    </location>
    <ligand>
        <name>2-oxoglutarate</name>
        <dbReference type="ChEBI" id="CHEBI:16810"/>
    </ligand>
</feature>
<gene>
    <name type="ordered locus">Syncc9605_1577</name>
</gene>